<proteinExistence type="evidence at protein level"/>
<dbReference type="EMBL" id="AF201694">
    <property type="protein sequence ID" value="AAF91174.1"/>
    <property type="molecule type" value="mRNA"/>
</dbReference>
<dbReference type="EMBL" id="AL357472">
    <property type="protein sequence ID" value="CAB93109.1"/>
    <property type="molecule type" value="mRNA"/>
</dbReference>
<dbReference type="EMBL" id="AF308803">
    <property type="protein sequence ID" value="AAG34680.1"/>
    <property type="molecule type" value="mRNA"/>
</dbReference>
<dbReference type="EMBL" id="AK027754">
    <property type="protein sequence ID" value="BAB55345.1"/>
    <property type="molecule type" value="mRNA"/>
</dbReference>
<dbReference type="EMBL" id="AK074863">
    <property type="protein sequence ID" value="BAG52018.1"/>
    <property type="molecule type" value="mRNA"/>
</dbReference>
<dbReference type="EMBL" id="AC068831">
    <property type="status" value="NOT_ANNOTATED_CDS"/>
    <property type="molecule type" value="Genomic_DNA"/>
</dbReference>
<dbReference type="EMBL" id="CH471101">
    <property type="protein sequence ID" value="EAX02140.1"/>
    <property type="molecule type" value="Genomic_DNA"/>
</dbReference>
<dbReference type="EMBL" id="BC016445">
    <property type="protein sequence ID" value="AAH16445.1"/>
    <property type="molecule type" value="mRNA"/>
</dbReference>
<dbReference type="CCDS" id="CCDS10369.1">
    <molecule id="Q9H267-1"/>
</dbReference>
<dbReference type="RefSeq" id="NP_001276077.1">
    <property type="nucleotide sequence ID" value="NM_001289148.1"/>
</dbReference>
<dbReference type="RefSeq" id="NP_001276078.1">
    <molecule id="Q9H267-2"/>
    <property type="nucleotide sequence ID" value="NM_001289149.1"/>
</dbReference>
<dbReference type="RefSeq" id="NP_061138.3">
    <molecule id="Q9H267-1"/>
    <property type="nucleotide sequence ID" value="NM_018668.4"/>
</dbReference>
<dbReference type="RefSeq" id="XP_005254944.1">
    <molecule id="Q9H267-2"/>
    <property type="nucleotide sequence ID" value="XM_005254887.2"/>
</dbReference>
<dbReference type="RefSeq" id="XP_011519750.1">
    <property type="nucleotide sequence ID" value="XM_011521448.1"/>
</dbReference>
<dbReference type="RefSeq" id="XP_047288339.1">
    <molecule id="Q9H267-2"/>
    <property type="nucleotide sequence ID" value="XM_047432383.1"/>
</dbReference>
<dbReference type="RefSeq" id="XP_054233696.1">
    <molecule id="Q9H267-2"/>
    <property type="nucleotide sequence ID" value="XM_054377721.1"/>
</dbReference>
<dbReference type="RefSeq" id="XP_054233697.1">
    <molecule id="Q9H267-2"/>
    <property type="nucleotide sequence ID" value="XM_054377722.1"/>
</dbReference>
<dbReference type="SMR" id="Q9H267"/>
<dbReference type="BioGRID" id="117659">
    <property type="interactions" value="205"/>
</dbReference>
<dbReference type="ComplexPortal" id="CPX-6241">
    <property type="entry name" value="CHEVI tethering complex"/>
</dbReference>
<dbReference type="CORUM" id="Q9H267"/>
<dbReference type="FunCoup" id="Q9H267">
    <property type="interactions" value="2412"/>
</dbReference>
<dbReference type="IntAct" id="Q9H267">
    <property type="interactions" value="34"/>
</dbReference>
<dbReference type="MINT" id="Q9H267"/>
<dbReference type="STRING" id="9606.ENSP00000327650"/>
<dbReference type="GlyGen" id="Q9H267">
    <property type="glycosylation" value="1 site, 1 O-linked glycan (1 site)"/>
</dbReference>
<dbReference type="iPTMnet" id="Q9H267"/>
<dbReference type="MetOSite" id="Q9H267"/>
<dbReference type="PhosphoSitePlus" id="Q9H267"/>
<dbReference type="SwissPalm" id="Q9H267"/>
<dbReference type="BioMuta" id="VPS33B"/>
<dbReference type="DMDM" id="313104046"/>
<dbReference type="jPOST" id="Q9H267"/>
<dbReference type="MassIVE" id="Q9H267"/>
<dbReference type="PaxDb" id="9606-ENSP00000327650"/>
<dbReference type="PeptideAtlas" id="Q9H267"/>
<dbReference type="ProteomicsDB" id="3557"/>
<dbReference type="ProteomicsDB" id="80506">
    <molecule id="Q9H267-1"/>
</dbReference>
<dbReference type="Pumba" id="Q9H267"/>
<dbReference type="Antibodypedia" id="28996">
    <property type="antibodies" value="107 antibodies from 22 providers"/>
</dbReference>
<dbReference type="DNASU" id="26276"/>
<dbReference type="Ensembl" id="ENST00000333371.8">
    <molecule id="Q9H267-1"/>
    <property type="protein sequence ID" value="ENSP00000327650.4"/>
    <property type="gene ID" value="ENSG00000184056.15"/>
</dbReference>
<dbReference type="GeneID" id="26276"/>
<dbReference type="KEGG" id="hsa:26276"/>
<dbReference type="MANE-Select" id="ENST00000333371.8">
    <property type="protein sequence ID" value="ENSP00000327650.4"/>
    <property type="RefSeq nucleotide sequence ID" value="NM_018668.5"/>
    <property type="RefSeq protein sequence ID" value="NP_061138.3"/>
</dbReference>
<dbReference type="UCSC" id="uc002bqp.3">
    <molecule id="Q9H267-1"/>
    <property type="organism name" value="human"/>
</dbReference>
<dbReference type="AGR" id="HGNC:12712"/>
<dbReference type="CTD" id="26276"/>
<dbReference type="DisGeNET" id="26276"/>
<dbReference type="GeneCards" id="VPS33B"/>
<dbReference type="HGNC" id="HGNC:12712">
    <property type="gene designation" value="VPS33B"/>
</dbReference>
<dbReference type="HPA" id="ENSG00000184056">
    <property type="expression patterns" value="Low tissue specificity"/>
</dbReference>
<dbReference type="MalaCards" id="VPS33B"/>
<dbReference type="MIM" id="208085">
    <property type="type" value="phenotype"/>
</dbReference>
<dbReference type="MIM" id="608552">
    <property type="type" value="gene"/>
</dbReference>
<dbReference type="MIM" id="620009">
    <property type="type" value="phenotype"/>
</dbReference>
<dbReference type="MIM" id="620010">
    <property type="type" value="phenotype"/>
</dbReference>
<dbReference type="neXtProt" id="NX_Q9H267"/>
<dbReference type="OpenTargets" id="ENSG00000184056"/>
<dbReference type="Orphanet" id="2697">
    <property type="disease" value="Arthrogryposis-renal dysfunction-cholestasis syndrome"/>
</dbReference>
<dbReference type="PharmGKB" id="PA37327"/>
<dbReference type="VEuPathDB" id="HostDB:ENSG00000184056"/>
<dbReference type="eggNOG" id="KOG1302">
    <property type="taxonomic scope" value="Eukaryota"/>
</dbReference>
<dbReference type="GeneTree" id="ENSGT00940000156813"/>
<dbReference type="HOGENOM" id="CLU_016678_3_1_1"/>
<dbReference type="InParanoid" id="Q9H267"/>
<dbReference type="OMA" id="NWIGITR"/>
<dbReference type="OrthoDB" id="10262528at2759"/>
<dbReference type="PAN-GO" id="Q9H267">
    <property type="GO annotations" value="4 GO annotations based on evolutionary models"/>
</dbReference>
<dbReference type="PhylomeDB" id="Q9H267"/>
<dbReference type="TreeFam" id="TF315126"/>
<dbReference type="PathwayCommons" id="Q9H267"/>
<dbReference type="Reactome" id="R-HSA-9636383">
    <property type="pathway name" value="Prevention of phagosomal-lysosomal fusion"/>
</dbReference>
<dbReference type="Reactome" id="R-HSA-9754560">
    <property type="pathway name" value="SARS-CoV-2 modulates autophagy"/>
</dbReference>
<dbReference type="SignaLink" id="Q9H267"/>
<dbReference type="SIGNOR" id="Q9H267"/>
<dbReference type="BioGRID-ORCS" id="26276">
    <property type="hits" value="14 hits in 1153 CRISPR screens"/>
</dbReference>
<dbReference type="ChiTaRS" id="VPS33B">
    <property type="organism name" value="human"/>
</dbReference>
<dbReference type="GeneWiki" id="VPS33B"/>
<dbReference type="GenomeRNAi" id="26276"/>
<dbReference type="Pharos" id="Q9H267">
    <property type="development level" value="Tbio"/>
</dbReference>
<dbReference type="PRO" id="PR:Q9H267"/>
<dbReference type="Proteomes" id="UP000005640">
    <property type="component" value="Chromosome 15"/>
</dbReference>
<dbReference type="RNAct" id="Q9H267">
    <property type="molecule type" value="protein"/>
</dbReference>
<dbReference type="Bgee" id="ENSG00000184056">
    <property type="expression patterns" value="Expressed in pancreatic ductal cell and 192 other cell types or tissues"/>
</dbReference>
<dbReference type="ExpressionAtlas" id="Q9H267">
    <property type="expression patterns" value="baseline and differential"/>
</dbReference>
<dbReference type="GO" id="GO:0030136">
    <property type="term" value="C:clathrin-coated vesicle"/>
    <property type="evidence" value="ECO:0000314"/>
    <property type="project" value="UniProtKB"/>
</dbReference>
<dbReference type="GO" id="GO:0033263">
    <property type="term" value="C:CORVET complex"/>
    <property type="evidence" value="ECO:0000318"/>
    <property type="project" value="GO_Central"/>
</dbReference>
<dbReference type="GO" id="GO:0005737">
    <property type="term" value="C:cytoplasm"/>
    <property type="evidence" value="ECO:0000314"/>
    <property type="project" value="UniProtKB"/>
</dbReference>
<dbReference type="GO" id="GO:0005829">
    <property type="term" value="C:cytosol"/>
    <property type="evidence" value="ECO:0000304"/>
    <property type="project" value="Reactome"/>
</dbReference>
<dbReference type="GO" id="GO:0031901">
    <property type="term" value="C:early endosome membrane"/>
    <property type="evidence" value="ECO:0000314"/>
    <property type="project" value="UniProtKB"/>
</dbReference>
<dbReference type="GO" id="GO:0005768">
    <property type="term" value="C:endosome"/>
    <property type="evidence" value="ECO:0000314"/>
    <property type="project" value="ComplexPortal"/>
</dbReference>
<dbReference type="GO" id="GO:0010008">
    <property type="term" value="C:endosome membrane"/>
    <property type="evidence" value="ECO:0000304"/>
    <property type="project" value="Reactome"/>
</dbReference>
<dbReference type="GO" id="GO:0005794">
    <property type="term" value="C:Golgi apparatus"/>
    <property type="evidence" value="ECO:0000314"/>
    <property type="project" value="MGI"/>
</dbReference>
<dbReference type="GO" id="GO:0030897">
    <property type="term" value="C:HOPS complex"/>
    <property type="evidence" value="ECO:0000314"/>
    <property type="project" value="UniProtKB"/>
</dbReference>
<dbReference type="GO" id="GO:0005770">
    <property type="term" value="C:late endosome"/>
    <property type="evidence" value="ECO:0000314"/>
    <property type="project" value="UniProtKB"/>
</dbReference>
<dbReference type="GO" id="GO:0031902">
    <property type="term" value="C:late endosome membrane"/>
    <property type="evidence" value="ECO:0007669"/>
    <property type="project" value="UniProtKB-SubCell"/>
</dbReference>
<dbReference type="GO" id="GO:0005765">
    <property type="term" value="C:lysosomal membrane"/>
    <property type="evidence" value="ECO:0007669"/>
    <property type="project" value="UniProtKB-SubCell"/>
</dbReference>
<dbReference type="GO" id="GO:0005764">
    <property type="term" value="C:lysosome"/>
    <property type="evidence" value="ECO:0000314"/>
    <property type="project" value="UniProtKB"/>
</dbReference>
<dbReference type="GO" id="GO:0048471">
    <property type="term" value="C:perinuclear region of cytoplasm"/>
    <property type="evidence" value="ECO:0000314"/>
    <property type="project" value="UniProtKB"/>
</dbReference>
<dbReference type="GO" id="GO:0031091">
    <property type="term" value="C:platelet alpha granule"/>
    <property type="evidence" value="ECO:0000314"/>
    <property type="project" value="UniProtKB"/>
</dbReference>
<dbReference type="GO" id="GO:0055037">
    <property type="term" value="C:recycling endosome"/>
    <property type="evidence" value="ECO:0007669"/>
    <property type="project" value="UniProtKB-SubCell"/>
</dbReference>
<dbReference type="GO" id="GO:0099023">
    <property type="term" value="C:vesicle tethering complex"/>
    <property type="evidence" value="ECO:0000353"/>
    <property type="project" value="ComplexPortal"/>
</dbReference>
<dbReference type="GO" id="GO:0044877">
    <property type="term" value="F:protein-containing complex binding"/>
    <property type="evidence" value="ECO:0000353"/>
    <property type="project" value="GO_Central"/>
</dbReference>
<dbReference type="GO" id="GO:0030199">
    <property type="term" value="P:collagen fibril organization"/>
    <property type="evidence" value="ECO:0007669"/>
    <property type="project" value="Ensembl"/>
</dbReference>
<dbReference type="GO" id="GO:0032963">
    <property type="term" value="P:collagen metabolic process"/>
    <property type="evidence" value="ECO:0000315"/>
    <property type="project" value="MGI"/>
</dbReference>
<dbReference type="GO" id="GO:0007032">
    <property type="term" value="P:endosome organization"/>
    <property type="evidence" value="ECO:0000315"/>
    <property type="project" value="UniProtKB"/>
</dbReference>
<dbReference type="GO" id="GO:0006886">
    <property type="term" value="P:intracellular protein transport"/>
    <property type="evidence" value="ECO:0000318"/>
    <property type="project" value="GO_Central"/>
</dbReference>
<dbReference type="GO" id="GO:0046907">
    <property type="term" value="P:intracellular transport"/>
    <property type="evidence" value="ECO:0000303"/>
    <property type="project" value="ComplexPortal"/>
</dbReference>
<dbReference type="GO" id="GO:0032418">
    <property type="term" value="P:lysosome localization"/>
    <property type="evidence" value="ECO:0000314"/>
    <property type="project" value="UniProtKB"/>
</dbReference>
<dbReference type="GO" id="GO:0035855">
    <property type="term" value="P:megakaryocyte development"/>
    <property type="evidence" value="ECO:0007669"/>
    <property type="project" value="Ensembl"/>
</dbReference>
<dbReference type="GO" id="GO:0032400">
    <property type="term" value="P:melanosome localization"/>
    <property type="evidence" value="ECO:0000314"/>
    <property type="project" value="UniProtKB"/>
</dbReference>
<dbReference type="GO" id="GO:0061025">
    <property type="term" value="P:membrane fusion"/>
    <property type="evidence" value="ECO:0000315"/>
    <property type="project" value="UniProtKB"/>
</dbReference>
<dbReference type="GO" id="GO:0017185">
    <property type="term" value="P:peptidyl-lysine hydroxylation"/>
    <property type="evidence" value="ECO:0000315"/>
    <property type="project" value="MGI"/>
</dbReference>
<dbReference type="GO" id="GO:0090385">
    <property type="term" value="P:phagosome-lysosome fusion"/>
    <property type="evidence" value="ECO:0000303"/>
    <property type="project" value="ComplexPortal"/>
</dbReference>
<dbReference type="GO" id="GO:0070889">
    <property type="term" value="P:platelet alpha granule organization"/>
    <property type="evidence" value="ECO:0000315"/>
    <property type="project" value="UniProtKB"/>
</dbReference>
<dbReference type="GO" id="GO:0015031">
    <property type="term" value="P:protein transport"/>
    <property type="evidence" value="ECO:0000315"/>
    <property type="project" value="UniProtKB"/>
</dbReference>
<dbReference type="GO" id="GO:0090330">
    <property type="term" value="P:regulation of platelet aggregation"/>
    <property type="evidence" value="ECO:0007669"/>
    <property type="project" value="Ensembl"/>
</dbReference>
<dbReference type="GO" id="GO:0043589">
    <property type="term" value="P:skin morphogenesis"/>
    <property type="evidence" value="ECO:0000315"/>
    <property type="project" value="UniProtKB"/>
</dbReference>
<dbReference type="GO" id="GO:0016192">
    <property type="term" value="P:vesicle-mediated transport"/>
    <property type="evidence" value="ECO:0000314"/>
    <property type="project" value="MGI"/>
</dbReference>
<dbReference type="FunFam" id="1.25.40.850:FF:000001">
    <property type="entry name" value="vacuolar protein sorting-associated protein 33B isoform X1"/>
    <property type="match status" value="1"/>
</dbReference>
<dbReference type="FunFam" id="3.40.50.2060:FF:000005">
    <property type="entry name" value="vacuolar protein sorting-associated protein 33B isoform X1"/>
    <property type="match status" value="1"/>
</dbReference>
<dbReference type="FunFam" id="3.90.830.10:FF:000004">
    <property type="entry name" value="vacuolar protein sorting-associated protein 33B isoform X1"/>
    <property type="match status" value="1"/>
</dbReference>
<dbReference type="FunFam" id="3.40.50.1910:FF:000003">
    <property type="entry name" value="vacuolar protein sorting-associated protein 33B isoform X2"/>
    <property type="match status" value="1"/>
</dbReference>
<dbReference type="Gene3D" id="1.25.40.850">
    <property type="match status" value="1"/>
</dbReference>
<dbReference type="Gene3D" id="3.40.50.1910">
    <property type="match status" value="1"/>
</dbReference>
<dbReference type="Gene3D" id="3.40.50.2060">
    <property type="match status" value="1"/>
</dbReference>
<dbReference type="Gene3D" id="3.90.830.10">
    <property type="entry name" value="Syntaxin Binding Protein 1, Chain A, domain 2"/>
    <property type="match status" value="1"/>
</dbReference>
<dbReference type="InterPro" id="IPR043154">
    <property type="entry name" value="Sec-1-like_dom1"/>
</dbReference>
<dbReference type="InterPro" id="IPR043127">
    <property type="entry name" value="Sec-1-like_dom3a"/>
</dbReference>
<dbReference type="InterPro" id="IPR001619">
    <property type="entry name" value="Sec1-like"/>
</dbReference>
<dbReference type="InterPro" id="IPR027482">
    <property type="entry name" value="Sec1-like_dom2"/>
</dbReference>
<dbReference type="InterPro" id="IPR036045">
    <property type="entry name" value="Sec1-like_sf"/>
</dbReference>
<dbReference type="InterPro" id="IPR043155">
    <property type="entry name" value="VPS33_dom3b"/>
</dbReference>
<dbReference type="PANTHER" id="PTHR11679">
    <property type="entry name" value="VESICLE PROTEIN SORTING-ASSOCIATED"/>
    <property type="match status" value="1"/>
</dbReference>
<dbReference type="Pfam" id="PF00995">
    <property type="entry name" value="Sec1"/>
    <property type="match status" value="1"/>
</dbReference>
<dbReference type="SUPFAM" id="SSF56815">
    <property type="entry name" value="Sec1/munc18-like (SM) proteins"/>
    <property type="match status" value="1"/>
</dbReference>
<keyword id="KW-0007">Acetylation</keyword>
<keyword id="KW-0025">Alternative splicing</keyword>
<keyword id="KW-0968">Cytoplasmic vesicle</keyword>
<keyword id="KW-0209">Deafness</keyword>
<keyword id="KW-0225">Disease variant</keyword>
<keyword id="KW-0967">Endosome</keyword>
<keyword id="KW-0977">Ichthyosis</keyword>
<keyword id="KW-0988">Intrahepatic cholestasis</keyword>
<keyword id="KW-0458">Lysosome</keyword>
<keyword id="KW-0472">Membrane</keyword>
<keyword id="KW-1007">Palmoplantar keratoderma</keyword>
<keyword id="KW-0597">Phosphoprotein</keyword>
<keyword id="KW-0653">Protein transport</keyword>
<keyword id="KW-1267">Proteomics identification</keyword>
<keyword id="KW-1185">Reference proteome</keyword>
<keyword id="KW-0813">Transport</keyword>
<reference key="1">
    <citation type="journal article" date="2000" name="Cytogenet. Cell Genet.">
        <title>Cloning, mapping and expression analysis of VPS33B, the human orthologue of rat Vps33b.</title>
        <authorList>
            <person name="Carim-Todd L."/>
            <person name="Sumoy L."/>
            <person name="Andreu N."/>
            <person name="Estivill X."/>
            <person name="Escarceller M."/>
        </authorList>
    </citation>
    <scope>NUCLEOTIDE SEQUENCE [MRNA] (ISOFORM 1)</scope>
    <scope>VARIANT SER-514</scope>
</reference>
<reference key="2">
    <citation type="journal article" date="2001" name="Gene">
        <title>Molecular cloning and characterization of human VPS18, VPS11, VPS16, and VPS33.</title>
        <authorList>
            <person name="Huizing M."/>
            <person name="Didier A."/>
            <person name="Walenta J."/>
            <person name="Anikster Y."/>
            <person name="Gahl W.A."/>
            <person name="Kraemer H."/>
        </authorList>
    </citation>
    <scope>NUCLEOTIDE SEQUENCE [MRNA] (ISOFORM 1)</scope>
</reference>
<reference key="3">
    <citation type="journal article" date="2004" name="Nat. Genet.">
        <title>Complete sequencing and characterization of 21,243 full-length human cDNAs.</title>
        <authorList>
            <person name="Ota T."/>
            <person name="Suzuki Y."/>
            <person name="Nishikawa T."/>
            <person name="Otsuki T."/>
            <person name="Sugiyama T."/>
            <person name="Irie R."/>
            <person name="Wakamatsu A."/>
            <person name="Hayashi K."/>
            <person name="Sato H."/>
            <person name="Nagai K."/>
            <person name="Kimura K."/>
            <person name="Makita H."/>
            <person name="Sekine M."/>
            <person name="Obayashi M."/>
            <person name="Nishi T."/>
            <person name="Shibahara T."/>
            <person name="Tanaka T."/>
            <person name="Ishii S."/>
            <person name="Yamamoto J."/>
            <person name="Saito K."/>
            <person name="Kawai Y."/>
            <person name="Isono Y."/>
            <person name="Nakamura Y."/>
            <person name="Nagahari K."/>
            <person name="Murakami K."/>
            <person name="Yasuda T."/>
            <person name="Iwayanagi T."/>
            <person name="Wagatsuma M."/>
            <person name="Shiratori A."/>
            <person name="Sudo H."/>
            <person name="Hosoiri T."/>
            <person name="Kaku Y."/>
            <person name="Kodaira H."/>
            <person name="Kondo H."/>
            <person name="Sugawara M."/>
            <person name="Takahashi M."/>
            <person name="Kanda K."/>
            <person name="Yokoi T."/>
            <person name="Furuya T."/>
            <person name="Kikkawa E."/>
            <person name="Omura Y."/>
            <person name="Abe K."/>
            <person name="Kamihara K."/>
            <person name="Katsuta N."/>
            <person name="Sato K."/>
            <person name="Tanikawa M."/>
            <person name="Yamazaki M."/>
            <person name="Ninomiya K."/>
            <person name="Ishibashi T."/>
            <person name="Yamashita H."/>
            <person name="Murakawa K."/>
            <person name="Fujimori K."/>
            <person name="Tanai H."/>
            <person name="Kimata M."/>
            <person name="Watanabe M."/>
            <person name="Hiraoka S."/>
            <person name="Chiba Y."/>
            <person name="Ishida S."/>
            <person name="Ono Y."/>
            <person name="Takiguchi S."/>
            <person name="Watanabe S."/>
            <person name="Yosida M."/>
            <person name="Hotuta T."/>
            <person name="Kusano J."/>
            <person name="Kanehori K."/>
            <person name="Takahashi-Fujii A."/>
            <person name="Hara H."/>
            <person name="Tanase T.-O."/>
            <person name="Nomura Y."/>
            <person name="Togiya S."/>
            <person name="Komai F."/>
            <person name="Hara R."/>
            <person name="Takeuchi K."/>
            <person name="Arita M."/>
            <person name="Imose N."/>
            <person name="Musashino K."/>
            <person name="Yuuki H."/>
            <person name="Oshima A."/>
            <person name="Sasaki N."/>
            <person name="Aotsuka S."/>
            <person name="Yoshikawa Y."/>
            <person name="Matsunawa H."/>
            <person name="Ichihara T."/>
            <person name="Shiohata N."/>
            <person name="Sano S."/>
            <person name="Moriya S."/>
            <person name="Momiyama H."/>
            <person name="Satoh N."/>
            <person name="Takami S."/>
            <person name="Terashima Y."/>
            <person name="Suzuki O."/>
            <person name="Nakagawa S."/>
            <person name="Senoh A."/>
            <person name="Mizoguchi H."/>
            <person name="Goto Y."/>
            <person name="Shimizu F."/>
            <person name="Wakebe H."/>
            <person name="Hishigaki H."/>
            <person name="Watanabe T."/>
            <person name="Sugiyama A."/>
            <person name="Takemoto M."/>
            <person name="Kawakami B."/>
            <person name="Yamazaki M."/>
            <person name="Watanabe K."/>
            <person name="Kumagai A."/>
            <person name="Itakura S."/>
            <person name="Fukuzumi Y."/>
            <person name="Fujimori Y."/>
            <person name="Komiyama M."/>
            <person name="Tashiro H."/>
            <person name="Tanigami A."/>
            <person name="Fujiwara T."/>
            <person name="Ono T."/>
            <person name="Yamada K."/>
            <person name="Fujii Y."/>
            <person name="Ozaki K."/>
            <person name="Hirao M."/>
            <person name="Ohmori Y."/>
            <person name="Kawabata A."/>
            <person name="Hikiji T."/>
            <person name="Kobatake N."/>
            <person name="Inagaki H."/>
            <person name="Ikema Y."/>
            <person name="Okamoto S."/>
            <person name="Okitani R."/>
            <person name="Kawakami T."/>
            <person name="Noguchi S."/>
            <person name="Itoh T."/>
            <person name="Shigeta K."/>
            <person name="Senba T."/>
            <person name="Matsumura K."/>
            <person name="Nakajima Y."/>
            <person name="Mizuno T."/>
            <person name="Morinaga M."/>
            <person name="Sasaki M."/>
            <person name="Togashi T."/>
            <person name="Oyama M."/>
            <person name="Hata H."/>
            <person name="Watanabe M."/>
            <person name="Komatsu T."/>
            <person name="Mizushima-Sugano J."/>
            <person name="Satoh T."/>
            <person name="Shirai Y."/>
            <person name="Takahashi Y."/>
            <person name="Nakagawa K."/>
            <person name="Okumura K."/>
            <person name="Nagase T."/>
            <person name="Nomura N."/>
            <person name="Kikuchi H."/>
            <person name="Masuho Y."/>
            <person name="Yamashita R."/>
            <person name="Nakai K."/>
            <person name="Yada T."/>
            <person name="Nakamura Y."/>
            <person name="Ohara O."/>
            <person name="Isogai T."/>
            <person name="Sugano S."/>
        </authorList>
    </citation>
    <scope>NUCLEOTIDE SEQUENCE [LARGE SCALE MRNA] (ISOFORMS 1 AND 2)</scope>
    <scope>VARIANT SER-514</scope>
    <source>
        <tissue>Placenta</tissue>
    </source>
</reference>
<reference key="4">
    <citation type="journal article" date="2006" name="Nature">
        <title>Analysis of the DNA sequence and duplication history of human chromosome 15.</title>
        <authorList>
            <person name="Zody M.C."/>
            <person name="Garber M."/>
            <person name="Sharpe T."/>
            <person name="Young S.K."/>
            <person name="Rowen L."/>
            <person name="O'Neill K."/>
            <person name="Whittaker C.A."/>
            <person name="Kamal M."/>
            <person name="Chang J.L."/>
            <person name="Cuomo C.A."/>
            <person name="Dewar K."/>
            <person name="FitzGerald M.G."/>
            <person name="Kodira C.D."/>
            <person name="Madan A."/>
            <person name="Qin S."/>
            <person name="Yang X."/>
            <person name="Abbasi N."/>
            <person name="Abouelleil A."/>
            <person name="Arachchi H.M."/>
            <person name="Baradarani L."/>
            <person name="Birditt B."/>
            <person name="Bloom S."/>
            <person name="Bloom T."/>
            <person name="Borowsky M.L."/>
            <person name="Burke J."/>
            <person name="Butler J."/>
            <person name="Cook A."/>
            <person name="DeArellano K."/>
            <person name="DeCaprio D."/>
            <person name="Dorris L. III"/>
            <person name="Dors M."/>
            <person name="Eichler E.E."/>
            <person name="Engels R."/>
            <person name="Fahey J."/>
            <person name="Fleetwood P."/>
            <person name="Friedman C."/>
            <person name="Gearin G."/>
            <person name="Hall J.L."/>
            <person name="Hensley G."/>
            <person name="Johnson E."/>
            <person name="Jones C."/>
            <person name="Kamat A."/>
            <person name="Kaur A."/>
            <person name="Locke D.P."/>
            <person name="Madan A."/>
            <person name="Munson G."/>
            <person name="Jaffe D.B."/>
            <person name="Lui A."/>
            <person name="Macdonald P."/>
            <person name="Mauceli E."/>
            <person name="Naylor J.W."/>
            <person name="Nesbitt R."/>
            <person name="Nicol R."/>
            <person name="O'Leary S.B."/>
            <person name="Ratcliffe A."/>
            <person name="Rounsley S."/>
            <person name="She X."/>
            <person name="Sneddon K.M.B."/>
            <person name="Stewart S."/>
            <person name="Sougnez C."/>
            <person name="Stone S.M."/>
            <person name="Topham K."/>
            <person name="Vincent D."/>
            <person name="Wang S."/>
            <person name="Zimmer A.R."/>
            <person name="Birren B.W."/>
            <person name="Hood L."/>
            <person name="Lander E.S."/>
            <person name="Nusbaum C."/>
        </authorList>
    </citation>
    <scope>NUCLEOTIDE SEQUENCE [LARGE SCALE GENOMIC DNA]</scope>
</reference>
<reference key="5">
    <citation type="submission" date="2005-09" db="EMBL/GenBank/DDBJ databases">
        <authorList>
            <person name="Mural R.J."/>
            <person name="Istrail S."/>
            <person name="Sutton G."/>
            <person name="Florea L."/>
            <person name="Halpern A.L."/>
            <person name="Mobarry C.M."/>
            <person name="Lippert R."/>
            <person name="Walenz B."/>
            <person name="Shatkay H."/>
            <person name="Dew I."/>
            <person name="Miller J.R."/>
            <person name="Flanigan M.J."/>
            <person name="Edwards N.J."/>
            <person name="Bolanos R."/>
            <person name="Fasulo D."/>
            <person name="Halldorsson B.V."/>
            <person name="Hannenhalli S."/>
            <person name="Turner R."/>
            <person name="Yooseph S."/>
            <person name="Lu F."/>
            <person name="Nusskern D.R."/>
            <person name="Shue B.C."/>
            <person name="Zheng X.H."/>
            <person name="Zhong F."/>
            <person name="Delcher A.L."/>
            <person name="Huson D.H."/>
            <person name="Kravitz S.A."/>
            <person name="Mouchard L."/>
            <person name="Reinert K."/>
            <person name="Remington K.A."/>
            <person name="Clark A.G."/>
            <person name="Waterman M.S."/>
            <person name="Eichler E.E."/>
            <person name="Adams M.D."/>
            <person name="Hunkapiller M.W."/>
            <person name="Myers E.W."/>
            <person name="Venter J.C."/>
        </authorList>
    </citation>
    <scope>NUCLEOTIDE SEQUENCE [LARGE SCALE GENOMIC DNA]</scope>
</reference>
<reference key="6">
    <citation type="journal article" date="2004" name="Genome Res.">
        <title>The status, quality, and expansion of the NIH full-length cDNA project: the Mammalian Gene Collection (MGC).</title>
        <authorList>
            <consortium name="The MGC Project Team"/>
        </authorList>
    </citation>
    <scope>NUCLEOTIDE SEQUENCE [LARGE SCALE MRNA] (ISOFORM 1)</scope>
    <scope>VARIANT SER-514</scope>
    <source>
        <tissue>Placenta</tissue>
    </source>
</reference>
<reference key="7">
    <citation type="journal article" date="2008" name="Cell Host Microbe">
        <title>Mycobacterium tuberculosis virulence is mediated by PtpA dephosphorylation of human vacuolar protein sorting 33B.</title>
        <authorList>
            <person name="Bach H."/>
            <person name="Papavinasasundaram K.G."/>
            <person name="Wong D."/>
            <person name="Hmama Z."/>
            <person name="Av-Gay Y."/>
        </authorList>
    </citation>
    <scope>FUNCTION</scope>
    <scope>DEPHOSPHORYLATION</scope>
    <scope>PHOSPHORYLATION</scope>
    <scope>INTERACTION WITH MYCOBACTERIUM TUBERCULOSIS PTPA (MICROBIAL INFECTION)</scope>
    <scope>MUTAGENESIS OF TYR-133; TYR-382; TYR-511 AND TYR-517</scope>
    <scope>SUBCELLULAR LOCATION</scope>
    <scope>IDENTIFICATION BY MASS SPECTROMETRY</scope>
</reference>
<reference key="8">
    <citation type="journal article" date="2009" name="Anal. Chem.">
        <title>Lys-N and trypsin cover complementary parts of the phosphoproteome in a refined SCX-based approach.</title>
        <authorList>
            <person name="Gauci S."/>
            <person name="Helbig A.O."/>
            <person name="Slijper M."/>
            <person name="Krijgsveld J."/>
            <person name="Heck A.J."/>
            <person name="Mohammed S."/>
        </authorList>
    </citation>
    <scope>ACETYLATION [LARGE SCALE ANALYSIS] AT ALA-2</scope>
    <scope>CLEAVAGE OF INITIATOR METHIONINE [LARGE SCALE ANALYSIS]</scope>
    <scope>IDENTIFICATION BY MASS SPECTROMETRY [LARGE SCALE ANALYSIS]</scope>
</reference>
<reference key="9">
    <citation type="journal article" date="2009" name="Mol. Biol. Cell">
        <title>SPE-39 family proteins interact with the HOPS complex and function in lysosomal delivery.</title>
        <authorList>
            <person name="Zhu G.D."/>
            <person name="Salazar G."/>
            <person name="Zlatic S.A."/>
            <person name="Fiza B."/>
            <person name="Doucette M.M."/>
            <person name="Heilman C.J."/>
            <person name="Levey A.I."/>
            <person name="Faundez V."/>
            <person name="L'hernault S.W."/>
        </authorList>
    </citation>
    <scope>SUBCELLULAR LOCATION</scope>
</reference>
<reference key="10">
    <citation type="journal article" date="2010" name="Nat. Genet.">
        <title>Mutations in VIPAR cause an arthrogryposis, renal dysfunction and cholestasis syndrome phenotype with defects in epithelial polarization.</title>
        <authorList>
            <person name="Cullinane A.R."/>
            <person name="Straatman-Iwanowska A."/>
            <person name="Zaucker A."/>
            <person name="Wakabayashi Y."/>
            <person name="Bruce C.K."/>
            <person name="Luo G."/>
            <person name="Rahman F."/>
            <person name="Gurakan F."/>
            <person name="Utine E."/>
            <person name="Ozkan T.B."/>
            <person name="Denecke J."/>
            <person name="Vukovic J."/>
            <person name="Di Rocco M."/>
            <person name="Mandel H."/>
            <person name="Cangul H."/>
            <person name="Matthews R.P."/>
            <person name="Thomas S.G."/>
            <person name="Rappoport J.Z."/>
            <person name="Arias I.M."/>
            <person name="Wolburg H."/>
            <person name="Knisely A.S."/>
            <person name="Kelly D.A."/>
            <person name="Muller F."/>
            <person name="Maher E.R."/>
            <person name="Gissen P."/>
        </authorList>
    </citation>
    <scope>FUNCTION</scope>
    <scope>INTERACTION WITH RAB11A AND VIPAS39</scope>
    <scope>CHARACTERIZATION OF VARIANT ARCS1 PRO-30</scope>
    <scope>SUBCELLULAR LOCATION</scope>
</reference>
<reference key="11">
    <citation type="journal article" date="2011" name="BMC Syst. Biol.">
        <title>Initial characterization of the human central proteome.</title>
        <authorList>
            <person name="Burkard T.R."/>
            <person name="Planyavsky M."/>
            <person name="Kaupe I."/>
            <person name="Breitwieser F.P."/>
            <person name="Buerckstuemmer T."/>
            <person name="Bennett K.L."/>
            <person name="Superti-Furga G."/>
            <person name="Colinge J."/>
        </authorList>
    </citation>
    <scope>IDENTIFICATION BY MASS SPECTROMETRY [LARGE SCALE ANALYSIS]</scope>
</reference>
<reference key="12">
    <citation type="journal article" date="2011" name="Mol. Biol. Cell">
        <title>Clathrin-dependent mechanisms modulate the subcellular distribution of class C Vps/HOPS tether subunits in polarized and nonpolarized cells.</title>
        <authorList>
            <person name="Zlatic S.A."/>
            <person name="Tornieri K."/>
            <person name="L'Hernault S.W."/>
            <person name="Faundez V."/>
        </authorList>
    </citation>
    <scope>SUBUNIT</scope>
    <scope>SUBCELLULAR LOCATION</scope>
</reference>
<reference key="13">
    <citation type="journal article" date="2012" name="Hum. Mutat.">
        <title>Associations among genotype, clinical phenotype, and intracellular localization of trafficking proteins in ARC syndrome.</title>
        <authorList>
            <person name="Smith H."/>
            <person name="Galmes R."/>
            <person name="Gogolina E."/>
            <person name="Straatman-Iwanowska A."/>
            <person name="Reay K."/>
            <person name="Banushi B."/>
            <person name="Bruce C.K."/>
            <person name="Cullinane A.R."/>
            <person name="Romero R."/>
            <person name="Chang R."/>
            <person name="Ackermann O."/>
            <person name="Baumann C."/>
            <person name="Cangul H."/>
            <person name="Cakmak Celik F."/>
            <person name="Aygun C."/>
            <person name="Coward R."/>
            <person name="Dionisi-Vici C."/>
            <person name="Sibbles B."/>
            <person name="Inward C."/>
            <person name="Kim C.A."/>
            <person name="Klumperman J."/>
            <person name="Knisely A.S."/>
            <person name="Watson S.P."/>
            <person name="Gissen P."/>
        </authorList>
    </citation>
    <scope>SUBCELLULAR LOCATION</scope>
    <scope>CHARACTERIZATION OF VARIANT ARCS1 PRO-30</scope>
</reference>
<reference key="14">
    <citation type="journal article" date="2013" name="Hum. Mol. Genet.">
        <title>Vps33b pathogenic mutations preferentially affect VIPAS39/SPE-39-positive endosomes.</title>
        <authorList>
            <person name="Tornieri K."/>
            <person name="Zlatic S.A."/>
            <person name="Mullin A.P."/>
            <person name="Werner E."/>
            <person name="Harrison R."/>
            <person name="L'hernault S.W."/>
            <person name="Faundez V."/>
        </authorList>
    </citation>
    <scope>FUNCTION</scope>
    <scope>CHARACTERIZATION OF VARIANTS ARCS1 PRO-30 AND PHE-243</scope>
    <scope>MUTAGENESIS OF 232-ASP--ASP-234; ASP-234; 235-VAL--PHE-237; GLY-249; 251-VAL--ASP-253 AND ASP-252</scope>
    <scope>INTERACTION WITH VIPAS39; STX7; VPS18 AND VPS41</scope>
</reference>
<reference key="15">
    <citation type="journal article" date="2013" name="Proc. Natl. Acad. Sci. U.S.A.">
        <title>Structural basis of Vps33A recruitment to the human HOPS complex by Vps16.</title>
        <authorList>
            <person name="Graham S.C."/>
            <person name="Wartosch L."/>
            <person name="Gray S.R."/>
            <person name="Scourfield E.J."/>
            <person name="Deane J.E."/>
            <person name="Luzio J.P."/>
            <person name="Owen D.J."/>
        </authorList>
    </citation>
    <scope>INTERACTION WITH VIPAS39</scope>
</reference>
<reference key="16">
    <citation type="journal article" date="2004" name="Nat. Genet.">
        <title>Mutations in VPS33B, encoding a regulator of SNARE-dependent membrane fusion, cause arthrogryposis-renal dysfunction-cholestasis (ARC) syndrome.</title>
        <authorList>
            <person name="Gissen P."/>
            <person name="Johnson C.A."/>
            <person name="Morgan N.V."/>
            <person name="Stapelbroek J.M."/>
            <person name="Forshew T."/>
            <person name="Cooper W.N."/>
            <person name="McKiernan P.J."/>
            <person name="Klomp L.W.J."/>
            <person name="Morris A.A.M."/>
            <person name="Wraith J.E."/>
            <person name="McClean P."/>
            <person name="Lynch S.A."/>
            <person name="Thompson R.J."/>
            <person name="Lo B."/>
            <person name="Quarrell O.W."/>
            <person name="Di Rocco M."/>
            <person name="Trembath R.C."/>
            <person name="Mandel H."/>
            <person name="Wali S."/>
            <person name="Karet F.E."/>
            <person name="Knisely A.S."/>
            <person name="Houwen R.H.J."/>
            <person name="Kelly D.A."/>
            <person name="Maher E.R."/>
        </authorList>
    </citation>
    <scope>VARIANT ARCS1 PRO-30</scope>
    <scope>SUBCELLULAR LOCATION</scope>
</reference>
<reference key="17">
    <citation type="journal article" date="2009" name="Hum. Mutat.">
        <title>Molecular investigations to improve diagnostic accuracy in patients with ARC syndrome.</title>
        <authorList>
            <person name="Cullinane A.R."/>
            <person name="Straatman-Iwanowska A."/>
            <person name="Seo J.K."/>
            <person name="Ko J.S."/>
            <person name="Song K.S."/>
            <person name="Gizewska M."/>
            <person name="Gruszfeld D."/>
            <person name="Gliwicz D."/>
            <person name="Tuysuz B."/>
            <person name="Erdemir G."/>
            <person name="Sougrat R."/>
            <person name="Wakabayashi Y."/>
            <person name="Hinds R."/>
            <person name="Barnicoat A."/>
            <person name="Mandel H."/>
            <person name="Chitayat D."/>
            <person name="Fischler B."/>
            <person name="Garcia-Cazorla A."/>
            <person name="Knisely A.S."/>
            <person name="Kelly D.A."/>
            <person name="Maher E.R."/>
            <person name="Gissen P."/>
        </authorList>
    </citation>
    <scope>VARIANT ARCS1 PHE-243</scope>
</reference>
<reference key="18">
    <citation type="journal article" date="2017" name="J. Invest. Dermatol.">
        <title>Autosomal Recessive Keratoderma-Ichthyosis-Deafness (ARKID) Syndrome Is Caused by VPS33B Mutations Affecting Rab Protein Interaction and Collagen Modification.</title>
        <authorList>
            <person name="Gruber R."/>
            <person name="Rogerson C."/>
            <person name="Windpassinger C."/>
            <person name="Banushi B."/>
            <person name="Straatman-Iwanowska A."/>
            <person name="Hanley J."/>
            <person name="Forneris F."/>
            <person name="Strohal R."/>
            <person name="Ulz P."/>
            <person name="Crumrine D."/>
            <person name="Menon G.K."/>
            <person name="Blunder S."/>
            <person name="Schmuth M."/>
            <person name="Mueller T."/>
            <person name="Smith H."/>
            <person name="Mills K."/>
            <person name="Kroisel P."/>
            <person name="Janecke A.R."/>
            <person name="Gissen P."/>
        </authorList>
    </citation>
    <scope>VARIANT KDIDAR GLU-131</scope>
    <scope>INVOLVEMENT IN KDIDAR</scope>
    <scope>CHARACTERIZATION OF VARIANT KDIDAR GLU-131</scope>
    <scope>INTERACTION WITH VIPAS39; RAB25 AND RAB11A</scope>
    <scope>FUNCTION</scope>
</reference>
<reference key="19">
    <citation type="journal article" date="2018" name="Am. J. Med. Genet. A">
        <title>Novel VPS33B mutation in a patient with autosomal recessive keratoderma-ichthyosis-deafness syndrome.</title>
        <authorList>
            <person name="Alter S."/>
            <person name="Hotz A."/>
            <person name="Jahn A."/>
            <person name="Di Donato N."/>
            <person name="Schroeck E."/>
            <person name="Smitka M."/>
            <person name="von der Hagen M."/>
            <person name="Schallner J."/>
            <person name="Menschikowski M."/>
            <person name="Gillitzer C."/>
            <person name="Laass M.W."/>
            <person name="Fischer J."/>
            <person name="Tzschach A."/>
        </authorList>
    </citation>
    <scope>VARIANT KDIDAR GLU-131</scope>
    <scope>INVOLVEMENT IN KDIDAR</scope>
</reference>
<reference key="20">
    <citation type="journal article" date="2019" name="Hum. Mutat.">
        <title>Novel missense mutation in VPS33B is associated with isolated low gamma-glutamyltransferase cholestasis: Attenuated, incomplete phenotype of arthrogryposis, renal dysfunction, and cholestasis syndrome.</title>
        <authorList>
            <person name="Qiu Y.L."/>
            <person name="Liu T."/>
            <person name="Abuduxikuer K."/>
            <person name="Hao C.Z."/>
            <person name="Gong J.Y."/>
            <person name="Zhang M.H."/>
            <person name="Li L.T."/>
            <person name="Yan Y.Y."/>
            <person name="Li J.Q."/>
            <person name="Wang J.S."/>
        </authorList>
    </citation>
    <scope>VARIANT ARCS1 523-ARG--ALA-617 DEL</scope>
    <scope>VARIANT PFIC12 ARG-576</scope>
    <scope>CHARACTERIZATION OF VARIANT PFIC12 ARG-576</scope>
    <scope>INVOLVEMENT IN PFIC12</scope>
    <scope>SUBCELLULAR LOCATION</scope>
</reference>
<name>VP33B_HUMAN</name>
<protein>
    <recommendedName>
        <fullName>Vacuolar protein sorting-associated protein 33B</fullName>
        <shortName>hVPS33B</shortName>
    </recommendedName>
</protein>
<evidence type="ECO:0000250" key="1">
    <source>
        <dbReference type="UniProtKB" id="P59016"/>
    </source>
</evidence>
<evidence type="ECO:0000269" key="2">
    <source>
    </source>
</evidence>
<evidence type="ECO:0000269" key="3">
    <source>
    </source>
</evidence>
<evidence type="ECO:0000269" key="4">
    <source>
    </source>
</evidence>
<evidence type="ECO:0000269" key="5">
    <source>
    </source>
</evidence>
<evidence type="ECO:0000269" key="6">
    <source>
    </source>
</evidence>
<evidence type="ECO:0000269" key="7">
    <source>
    </source>
</evidence>
<evidence type="ECO:0000269" key="8">
    <source>
    </source>
</evidence>
<evidence type="ECO:0000269" key="9">
    <source>
    </source>
</evidence>
<evidence type="ECO:0000269" key="10">
    <source>
    </source>
</evidence>
<evidence type="ECO:0000269" key="11">
    <source>
    </source>
</evidence>
<evidence type="ECO:0000269" key="12">
    <source>
    </source>
</evidence>
<evidence type="ECO:0000269" key="13">
    <source>
    </source>
</evidence>
<evidence type="ECO:0000269" key="14">
    <source>
    </source>
</evidence>
<evidence type="ECO:0000269" key="15">
    <source>
    </source>
</evidence>
<evidence type="ECO:0000269" key="16">
    <source>
    </source>
</evidence>
<evidence type="ECO:0000303" key="17">
    <source>
    </source>
</evidence>
<evidence type="ECO:0000305" key="18"/>
<evidence type="ECO:0000305" key="19">
    <source>
    </source>
</evidence>
<evidence type="ECO:0000305" key="20">
    <source>
    </source>
</evidence>
<evidence type="ECO:0007744" key="21">
    <source>
    </source>
</evidence>
<gene>
    <name type="primary">VPS33B</name>
</gene>
<accession>Q9H267</accession>
<accession>B3KQF6</accession>
<accession>Q96K14</accession>
<accession>Q9NRP6</accession>
<accession>Q9NSF3</accession>
<comment type="function">
    <text evidence="1 6 14 19 20">May play a role in vesicle-mediated protein trafficking to lysosomal compartments and in membrane docking/fusion reactions of late endosomes/lysosomes. Required for proper trafficking and targeting of the collagen-modifying enzyme lysyl hydroxylase 3 (LH3) to intracellular collagen (PubMed:28017832). Mediates phagolysosomal fusion in macrophages (PubMed:18474358). Proposed to be involved in endosomal maturation implicating VIPAS39. In epithelial cells, the VPS33B:VIPAS39 complex may play a role in the apical recycling pathway and in the maintenance of the apical-basolateral polarity (PubMed:20190753). Seems to be involved in the sorting of specific cargos from the trans-Golgi network to alpha-granule-destined multivesicular bodies (MVBs) promoting MVBs maturation in megakaryocytes (By similarity).</text>
</comment>
<comment type="subunit">
    <text evidence="9 10 12 14">Interacts with RAB11A and VIPAS39 (PubMed:28017832). Interacts with RAB25 (PubMed:28017832). Associates with adapter protein complex 3 (AP-3), clathrin:AP-3 and clathrin:HGS complexes (PubMed:21411634).</text>
</comment>
<comment type="subunit">
    <text evidence="6">(Microbial infection) Interacts with M.tuberculosis PtpA.</text>
</comment>
<comment type="interaction">
    <interactant intactId="EBI-749072">
        <id>Q9H267</id>
    </interactant>
    <interactant intactId="EBI-10305835">
        <id>Q6IA61</id>
        <label>C14orf133</label>
    </interactant>
    <organismsDiffer>false</organismsDiffer>
    <experiments>3</experiments>
</comment>
<comment type="interaction">
    <interactant intactId="EBI-749072">
        <id>Q9H267</id>
    </interactant>
    <interactant intactId="EBI-357849">
        <id>Q15025</id>
        <label>TNIP1</label>
    </interactant>
    <organismsDiffer>false</organismsDiffer>
    <experiments>9</experiments>
</comment>
<comment type="interaction">
    <interactant intactId="EBI-749072">
        <id>Q9H267</id>
    </interactant>
    <interactant intactId="EBI-749080">
        <id>Q9H9C1</id>
        <label>VIPAS39</label>
    </interactant>
    <organismsDiffer>false</organismsDiffer>
    <experiments>39</experiments>
</comment>
<comment type="subcellular location">
    <subcellularLocation>
        <location evidence="4">Late endosome membrane</location>
        <topology>Peripheral membrane protein</topology>
        <orientation>Cytoplasmic side</orientation>
    </subcellularLocation>
    <subcellularLocation>
        <location evidence="4">Lysosome membrane</location>
        <topology>Peripheral membrane protein</topology>
        <orientation>Cytoplasmic side</orientation>
    </subcellularLocation>
    <subcellularLocation>
        <location evidence="10">Early endosome</location>
    </subcellularLocation>
    <subcellularLocation>
        <location evidence="10">Cytoplasmic vesicle</location>
        <location evidence="10">Clathrin-coated vesicle</location>
    </subcellularLocation>
    <subcellularLocation>
        <location evidence="11">Recycling endosome</location>
    </subcellularLocation>
    <text evidence="6 8 10 11">Colocalizes in clusters with VIPAS39 at cytoplasmic organelles (PubMed:19109425, PubMed:31479177). Colocalizes with RAB11A and VIPAS39 on recycling endosomes (PubMed:22753090). Colocalizes with AP-3, clathrin, Rab5 and Rab7b (PubMed:21411634). Colocalizes with M.tuberculosis PtpA in the cytosol of tuberculosis-infected macrophages and associates with phagosomes (PubMed:18474358).</text>
</comment>
<comment type="alternative products">
    <event type="alternative splicing"/>
    <isoform>
        <id>Q9H267-1</id>
        <name>1</name>
        <sequence type="displayed"/>
    </isoform>
    <isoform>
        <id>Q9H267-2</id>
        <name>2</name>
        <sequence type="described" ref="VSP_056567"/>
    </isoform>
</comment>
<comment type="tissue specificity">
    <text>Ubiquitous; highly expressed in testis and low expression in the lung.</text>
</comment>
<comment type="PTM">
    <text evidence="6">Phosphorylated on tyrosine residues.</text>
</comment>
<comment type="PTM">
    <text evidence="6">(Microbial infection) Dephosphorylated by M.tuberculosis PtpA, which induces the reduction of host phagolysosome fusion in M.tuberculosis-infected macrophages.</text>
</comment>
<comment type="disease" evidence="4 7 9 11 13 16">
    <disease id="DI-00136">
        <name>Arthrogryposis, renal dysfunction, and cholestasis 1</name>
        <acronym>ARCS1</acronym>
        <description>An autosomal recessive multisystem disorder with characteristics of congenital joint contractures, renal tubular dysfunction, neonatal cholestasis with bile duct hypoplasia and low gamma glutamyl transpeptidase activity, severe failure to thrive, ichthyosis, and a defect in platelet alpha-granule biogenesis. Most patients do not survive past the first year of life.</description>
        <dbReference type="MIM" id="208085"/>
    </disease>
    <text>The disease is caused by variants affecting the gene represented in this entry.</text>
</comment>
<comment type="disease" evidence="14 15">
    <disease id="DI-06486">
        <name>Keratoderma-ichthyosis-deafness syndrome, autosomal recessive</name>
        <acronym>KDIDAR</acronym>
        <description>An autosomal recessive disorder characterized by severe palmoplantar keratoderma, generalized ichthyosis, and sensorineural bilateral hearing loss. Additional variable features include contractures, mild bleeding diathesis, and psychomotor retardation.</description>
        <dbReference type="MIM" id="620009"/>
    </disease>
    <text>The disease is caused by variants affecting the gene represented in this entry.</text>
</comment>
<comment type="disease" evidence="16">
    <disease id="DI-06487">
        <name>Cholestasis, progressive familial intrahepatic, 12</name>
        <acronym>PFIC12</acronym>
        <description>A form of progressive cholestasis, a disorder characterized by early onset of cholestasis that progresses to hepatic fibrosis, cirrhosis, and end-stage liver disease. PFIC12 is an autosomal recessive form characterized by neonatal-onset jaundice and conjugated hyperbilirubinemia, associated with intense pruritus.</description>
        <dbReference type="MIM" id="620010"/>
    </disease>
    <text>The disease is caused by variants affecting the gene represented in this entry.</text>
</comment>
<comment type="similarity">
    <text evidence="18">Belongs to the STXBP/unc-18/SEC1 family.</text>
</comment>
<comment type="caution">
    <text evidence="18">According to PubMed:18474358, it is autophosphorylated. However, it is not related with protein kinases, suggesting it is phosphorylated by another protein.</text>
</comment>
<organism>
    <name type="scientific">Homo sapiens</name>
    <name type="common">Human</name>
    <dbReference type="NCBI Taxonomy" id="9606"/>
    <lineage>
        <taxon>Eukaryota</taxon>
        <taxon>Metazoa</taxon>
        <taxon>Chordata</taxon>
        <taxon>Craniata</taxon>
        <taxon>Vertebrata</taxon>
        <taxon>Euteleostomi</taxon>
        <taxon>Mammalia</taxon>
        <taxon>Eutheria</taxon>
        <taxon>Euarchontoglires</taxon>
        <taxon>Primates</taxon>
        <taxon>Haplorrhini</taxon>
        <taxon>Catarrhini</taxon>
        <taxon>Hominidae</taxon>
        <taxon>Homo</taxon>
    </lineage>
</organism>
<sequence length="617" mass="70585">MAFPHRPDAPELPDFSMLKRLARDQLIYLLEQLPGKKDLFIEADLMSPLDRIANVSILKQHEVDKLYKVENKPALSSNEQLCFLVRPRIKNMRYIASLVNADKLAGRTRKYKVIFSPQKFYACEMVLEEEGIYGDVSCDEWAFSLLPLDVDLLSMELPEFFRDYFLEGDQRWINTVAQALHLLSTLYGPFPNCYGIGRCAKMAYELWRNLEEEEDGETKGRRPEIGHIFLLDRDVDFVTALCSQVVYEGLVDDTFRIKCGSVDFGPEVTSSDKSLKVLLNAEDKVFNEIRNEHFSNVFGFLSQKARNLQAQYDRRRGMDIKQMKNFVSQELKGLKQEHRLLSLHIGACESIMKKKTKQDFQELIKTEHALLEGFNIRESTSYIEEHIDRQVSPIESLRLMCLLSITENGLIPKDYRSLKTQYLQSYGPEHLLTFSNLRRAGLLTEQAPGDTLTAVESKVSKLVTDKAAGKITDAFSSLAKRSNFRAISKKLNLIPRVDGEYDLKVPRDMAYVFGGAYVPLSCRIIEQVLERRSWQGLDEVVRLLNCSDFAFTDMTKEDKASSESLRLILVVFLGGCTFSEISALRFLGREKGYRFIFLTTAVTNSARLMEAMSEVKA</sequence>
<feature type="initiator methionine" description="Removed" evidence="21">
    <location>
        <position position="1"/>
    </location>
</feature>
<feature type="chain" id="PRO_0000206305" description="Vacuolar protein sorting-associated protein 33B">
    <location>
        <begin position="2"/>
        <end position="617"/>
    </location>
</feature>
<feature type="modified residue" description="N-acetylalanine" evidence="21">
    <location>
        <position position="2"/>
    </location>
</feature>
<feature type="splice variant" id="VSP_056567" description="In isoform 2." evidence="17">
    <location>
        <begin position="1"/>
        <end position="91"/>
    </location>
</feature>
<feature type="sequence variant" id="VAR_018983" description="In ARCS1; effect on interaction with VIPAS39 is reported conflictingly but disrupts colocalization with VIPAS39 at cytoplasmic organelle; impairs localization to VIPAS39-containing endosomal compartment; and induces fragmentation of the VIPAS39-containing endosomal compartment; no effect on interaction with STX7 and association with the HOPS complex; dbSNP:rs121434385." evidence="4 9 11 13">
    <original>L</original>
    <variation>P</variation>
    <location>
        <position position="30"/>
    </location>
</feature>
<feature type="sequence variant" id="VAR_087658" description="In KDIDAR; disrupts vesicular trafficking of LH3 to intracellular collagen; does not affect interaction with VIPAS39; decreased interaction with RAB25 and RAB11A; dbSNP:rs1373855924." evidence="14 15">
    <original>G</original>
    <variation>E</variation>
    <location>
        <position position="131"/>
    </location>
</feature>
<feature type="sequence variant" id="VAR_057901" description="In ARCS1; no effect on interaction with VIPAS39; impairs localization to VIPAS39-containing endosomal compartment; dbSNP:rs139829189." evidence="7 13">
    <original>S</original>
    <variation>F</variation>
    <location>
        <position position="243"/>
    </location>
</feature>
<feature type="sequence variant" id="VAR_057330" description="In dbSNP:rs3177428.">
    <original>F</original>
    <variation>S</variation>
    <location>
        <position position="513"/>
    </location>
</feature>
<feature type="sequence variant" id="VAR_013828" description="In dbSNP:rs11073964." evidence="2 3 5">
    <original>G</original>
    <variation>S</variation>
    <location>
        <position position="514"/>
    </location>
</feature>
<feature type="sequence variant" id="VAR_087659" description="In ARCS1." evidence="16">
    <location>
        <begin position="523"/>
        <end position="617"/>
    </location>
</feature>
<feature type="sequence variant" id="VAR_087660" description="In PFIC12; disrupts colocalization with VIPAS39 at cytoplasmic organelle; decreased protein expression; dbSNP:rs1596348299." evidence="16">
    <original>C</original>
    <variation>R</variation>
    <location>
        <position position="576"/>
    </location>
</feature>
<feature type="mutagenesis site" description="Reduces phosphorylation activity, but does not impair phagolysosomal fusion in M.tuberculosis-infected macrophages; when associated with E-382; E-511 and E-517." evidence="6">
    <original>Y</original>
    <variation>E</variation>
    <location>
        <position position="133"/>
    </location>
</feature>
<feature type="mutagenesis site" description="Disrupts interaction with VIPAS39." evidence="13">
    <original>DRD</original>
    <variation>AAA</variation>
    <location>
        <begin position="232"/>
        <end position="234"/>
    </location>
</feature>
<feature type="mutagenesis site" description="No effect on interaction with VIPAS39; no effect on interaction with STX7 and association with the HOPS complex; impairs localization to VIPAS39-containing endosomal compartment." evidence="13">
    <original>D</original>
    <variation>H</variation>
    <location>
        <position position="234"/>
    </location>
</feature>
<feature type="mutagenesis site" description="Disrupts interaction with VIPAS39." evidence="13">
    <original>VDF</original>
    <variation>AAA</variation>
    <location>
        <begin position="235"/>
        <end position="237"/>
    </location>
</feature>
<feature type="mutagenesis site" description="Disrupts interaction with VIPAS39; no effect on interaction with STX7; impairs localization to VIPAS39-containing endosomal compartment." evidence="13">
    <original>G</original>
    <variation>V</variation>
    <location>
        <position position="249"/>
    </location>
</feature>
<feature type="mutagenesis site" description="Disrupts interaction with VIPAS39." evidence="13">
    <original>VDD</original>
    <variation>AAA</variation>
    <location>
        <begin position="251"/>
        <end position="253"/>
    </location>
</feature>
<feature type="mutagenesis site" description="No effect on interaction with VIPAS39 and STX7; impairs localization to VIPAS39-containing endosomal compartment." evidence="13">
    <original>D</original>
    <variation>E</variation>
    <location>
        <position position="252"/>
    </location>
</feature>
<feature type="mutagenesis site" description="Reduces phosphorylation activity, but does not impair phagolysosomal fusion in M.tuberculosis-infected macrophages; when associated with E-133; E-511 and E-517." evidence="6">
    <original>Y</original>
    <variation>E</variation>
    <location>
        <position position="382"/>
    </location>
</feature>
<feature type="mutagenesis site" description="Reduces phosphorylation activity, but does not impair phagolysosomal fusion in M.tuberculosis-infected macrophages; when associated with E-133; E-382 and E-517." evidence="6">
    <original>Y</original>
    <variation>E</variation>
    <location>
        <position position="511"/>
    </location>
</feature>
<feature type="mutagenesis site" description="Reduces phosphorylation activity, but does not impair phagolysosomal fusion in M.tuberculosis-infected macrophages; when associated with E-133; E-382 and E-511." evidence="6">
    <original>Y</original>
    <variation>E</variation>
    <location>
        <position position="517"/>
    </location>
</feature>
<feature type="sequence conflict" description="In Ref. 3; BAB55345." evidence="18" ref="3">
    <original>H</original>
    <variation>Y</variation>
    <location>
        <position position="293"/>
    </location>
</feature>
<feature type="sequence conflict" description="In Ref. 3; BAB55345." evidence="18" ref="3">
    <original>K</original>
    <variation>E</variation>
    <location>
        <position position="466"/>
    </location>
</feature>